<reference key="1">
    <citation type="journal article" date="2005" name="Science">
        <title>The transcriptional landscape of the mammalian genome.</title>
        <authorList>
            <person name="Carninci P."/>
            <person name="Kasukawa T."/>
            <person name="Katayama S."/>
            <person name="Gough J."/>
            <person name="Frith M.C."/>
            <person name="Maeda N."/>
            <person name="Oyama R."/>
            <person name="Ravasi T."/>
            <person name="Lenhard B."/>
            <person name="Wells C."/>
            <person name="Kodzius R."/>
            <person name="Shimokawa K."/>
            <person name="Bajic V.B."/>
            <person name="Brenner S.E."/>
            <person name="Batalov S."/>
            <person name="Forrest A.R."/>
            <person name="Zavolan M."/>
            <person name="Davis M.J."/>
            <person name="Wilming L.G."/>
            <person name="Aidinis V."/>
            <person name="Allen J.E."/>
            <person name="Ambesi-Impiombato A."/>
            <person name="Apweiler R."/>
            <person name="Aturaliya R.N."/>
            <person name="Bailey T.L."/>
            <person name="Bansal M."/>
            <person name="Baxter L."/>
            <person name="Beisel K.W."/>
            <person name="Bersano T."/>
            <person name="Bono H."/>
            <person name="Chalk A.M."/>
            <person name="Chiu K.P."/>
            <person name="Choudhary V."/>
            <person name="Christoffels A."/>
            <person name="Clutterbuck D.R."/>
            <person name="Crowe M.L."/>
            <person name="Dalla E."/>
            <person name="Dalrymple B.P."/>
            <person name="de Bono B."/>
            <person name="Della Gatta G."/>
            <person name="di Bernardo D."/>
            <person name="Down T."/>
            <person name="Engstrom P."/>
            <person name="Fagiolini M."/>
            <person name="Faulkner G."/>
            <person name="Fletcher C.F."/>
            <person name="Fukushima T."/>
            <person name="Furuno M."/>
            <person name="Futaki S."/>
            <person name="Gariboldi M."/>
            <person name="Georgii-Hemming P."/>
            <person name="Gingeras T.R."/>
            <person name="Gojobori T."/>
            <person name="Green R.E."/>
            <person name="Gustincich S."/>
            <person name="Harbers M."/>
            <person name="Hayashi Y."/>
            <person name="Hensch T.K."/>
            <person name="Hirokawa N."/>
            <person name="Hill D."/>
            <person name="Huminiecki L."/>
            <person name="Iacono M."/>
            <person name="Ikeo K."/>
            <person name="Iwama A."/>
            <person name="Ishikawa T."/>
            <person name="Jakt M."/>
            <person name="Kanapin A."/>
            <person name="Katoh M."/>
            <person name="Kawasawa Y."/>
            <person name="Kelso J."/>
            <person name="Kitamura H."/>
            <person name="Kitano H."/>
            <person name="Kollias G."/>
            <person name="Krishnan S.P."/>
            <person name="Kruger A."/>
            <person name="Kummerfeld S.K."/>
            <person name="Kurochkin I.V."/>
            <person name="Lareau L.F."/>
            <person name="Lazarevic D."/>
            <person name="Lipovich L."/>
            <person name="Liu J."/>
            <person name="Liuni S."/>
            <person name="McWilliam S."/>
            <person name="Madan Babu M."/>
            <person name="Madera M."/>
            <person name="Marchionni L."/>
            <person name="Matsuda H."/>
            <person name="Matsuzawa S."/>
            <person name="Miki H."/>
            <person name="Mignone F."/>
            <person name="Miyake S."/>
            <person name="Morris K."/>
            <person name="Mottagui-Tabar S."/>
            <person name="Mulder N."/>
            <person name="Nakano N."/>
            <person name="Nakauchi H."/>
            <person name="Ng P."/>
            <person name="Nilsson R."/>
            <person name="Nishiguchi S."/>
            <person name="Nishikawa S."/>
            <person name="Nori F."/>
            <person name="Ohara O."/>
            <person name="Okazaki Y."/>
            <person name="Orlando V."/>
            <person name="Pang K.C."/>
            <person name="Pavan W.J."/>
            <person name="Pavesi G."/>
            <person name="Pesole G."/>
            <person name="Petrovsky N."/>
            <person name="Piazza S."/>
            <person name="Reed J."/>
            <person name="Reid J.F."/>
            <person name="Ring B.Z."/>
            <person name="Ringwald M."/>
            <person name="Rost B."/>
            <person name="Ruan Y."/>
            <person name="Salzberg S.L."/>
            <person name="Sandelin A."/>
            <person name="Schneider C."/>
            <person name="Schoenbach C."/>
            <person name="Sekiguchi K."/>
            <person name="Semple C.A."/>
            <person name="Seno S."/>
            <person name="Sessa L."/>
            <person name="Sheng Y."/>
            <person name="Shibata Y."/>
            <person name="Shimada H."/>
            <person name="Shimada K."/>
            <person name="Silva D."/>
            <person name="Sinclair B."/>
            <person name="Sperling S."/>
            <person name="Stupka E."/>
            <person name="Sugiura K."/>
            <person name="Sultana R."/>
            <person name="Takenaka Y."/>
            <person name="Taki K."/>
            <person name="Tammoja K."/>
            <person name="Tan S.L."/>
            <person name="Tang S."/>
            <person name="Taylor M.S."/>
            <person name="Tegner J."/>
            <person name="Teichmann S.A."/>
            <person name="Ueda H.R."/>
            <person name="van Nimwegen E."/>
            <person name="Verardo R."/>
            <person name="Wei C.L."/>
            <person name="Yagi K."/>
            <person name="Yamanishi H."/>
            <person name="Zabarovsky E."/>
            <person name="Zhu S."/>
            <person name="Zimmer A."/>
            <person name="Hide W."/>
            <person name="Bult C."/>
            <person name="Grimmond S.M."/>
            <person name="Teasdale R.D."/>
            <person name="Liu E.T."/>
            <person name="Brusic V."/>
            <person name="Quackenbush J."/>
            <person name="Wahlestedt C."/>
            <person name="Mattick J.S."/>
            <person name="Hume D.A."/>
            <person name="Kai C."/>
            <person name="Sasaki D."/>
            <person name="Tomaru Y."/>
            <person name="Fukuda S."/>
            <person name="Kanamori-Katayama M."/>
            <person name="Suzuki M."/>
            <person name="Aoki J."/>
            <person name="Arakawa T."/>
            <person name="Iida J."/>
            <person name="Imamura K."/>
            <person name="Itoh M."/>
            <person name="Kato T."/>
            <person name="Kawaji H."/>
            <person name="Kawagashira N."/>
            <person name="Kawashima T."/>
            <person name="Kojima M."/>
            <person name="Kondo S."/>
            <person name="Konno H."/>
            <person name="Nakano K."/>
            <person name="Ninomiya N."/>
            <person name="Nishio T."/>
            <person name="Okada M."/>
            <person name="Plessy C."/>
            <person name="Shibata K."/>
            <person name="Shiraki T."/>
            <person name="Suzuki S."/>
            <person name="Tagami M."/>
            <person name="Waki K."/>
            <person name="Watahiki A."/>
            <person name="Okamura-Oho Y."/>
            <person name="Suzuki H."/>
            <person name="Kawai J."/>
            <person name="Hayashizaki Y."/>
        </authorList>
    </citation>
    <scope>NUCLEOTIDE SEQUENCE [LARGE SCALE MRNA] (ISOFORMS 1; 2 AND 3)</scope>
    <source>
        <strain>C57BL/6J</strain>
        <tissue>Cecum</tissue>
        <tissue>Cerebellum</tissue>
        <tissue>Testis</tissue>
    </source>
</reference>
<proteinExistence type="evidence at protein level"/>
<evidence type="ECO:0000255" key="1"/>
<evidence type="ECO:0000256" key="2">
    <source>
        <dbReference type="SAM" id="MobiDB-lite"/>
    </source>
</evidence>
<evidence type="ECO:0000303" key="3">
    <source>
    </source>
</evidence>
<evidence type="ECO:0000305" key="4"/>
<name>ANR42_MOUSE</name>
<accession>Q3V096</accession>
<accession>Q8BX55</accession>
<accession>Q8BZT3</accession>
<accession>Q8C0T6</accession>
<accession>Q8C0X5</accession>
<protein>
    <recommendedName>
        <fullName>Ankyrin repeat domain-containing protein 42</fullName>
    </recommendedName>
</protein>
<sequence>MPGVANPGPSKSRRETADSSSRKKVHFSSIHDAVRAGDVKQLSDIVERGANLNEVDALHQFTPLHWAAHSGSLECLHWLLWSGADATQTTTRGWTAAHIAAIRGQDACLQALIINGANLATQDDRGCTPLHLAATHGHSFSLQIMLRSGVDPSVTDKREWKPVHYASFHGRLGCLQLLVKWGCGIEDVDYNGNLPVHLAAMEGHLHCLKFLLSRMNSATQALKAFNDNGENVLDLAQRFLKQNVVEFIQGAQYEGSHPDDHDDLAFPGHVAAFKGDLEVLKKLIGDGVINLNERDDNGSTPMHKAAGQGHIDCLQWLIEMGAESNITNKAGETPSDVAKRFAHLAAVKLLEGLQKYEIDDIESDKDHINFFTRHGVEGSTDAKDDLCLSESDKANARMRAHKKIVELRQLLEIAESNFKHLGGITEEDLKQKKEQLESKKTINELQGQLAYERLRREKLECQLDEYRVEVDQLKETLQKIQVTSVAAMEDDSCESSKEKRRVKKKVSPGGVFVRSYQRIRTSISSQV</sequence>
<keyword id="KW-0025">Alternative splicing</keyword>
<keyword id="KW-0040">ANK repeat</keyword>
<keyword id="KW-0175">Coiled coil</keyword>
<keyword id="KW-1185">Reference proteome</keyword>
<keyword id="KW-0677">Repeat</keyword>
<dbReference type="EMBL" id="AK029511">
    <property type="protein sequence ID" value="BAC26485.1"/>
    <property type="molecule type" value="mRNA"/>
</dbReference>
<dbReference type="EMBL" id="AK029888">
    <property type="protein sequence ID" value="BAC26659.1"/>
    <property type="molecule type" value="mRNA"/>
</dbReference>
<dbReference type="EMBL" id="AK033599">
    <property type="protein sequence ID" value="BAC28380.1"/>
    <property type="molecule type" value="mRNA"/>
</dbReference>
<dbReference type="EMBL" id="AK048925">
    <property type="protein sequence ID" value="BAC33494.1"/>
    <property type="molecule type" value="mRNA"/>
</dbReference>
<dbReference type="EMBL" id="AK133339">
    <property type="protein sequence ID" value="BAE21608.1"/>
    <property type="molecule type" value="mRNA"/>
</dbReference>
<dbReference type="RefSeq" id="NP_001394841.1">
    <molecule id="Q3V096-1"/>
    <property type="nucleotide sequence ID" value="NM_001407912.1"/>
</dbReference>
<dbReference type="RefSeq" id="NP_082941.2">
    <property type="nucleotide sequence ID" value="NM_028665.4"/>
</dbReference>
<dbReference type="SMR" id="Q3V096"/>
<dbReference type="DIP" id="DIP-59545N"/>
<dbReference type="FunCoup" id="Q3V096">
    <property type="interactions" value="2015"/>
</dbReference>
<dbReference type="IntAct" id="Q3V096">
    <property type="interactions" value="1"/>
</dbReference>
<dbReference type="STRING" id="10090.ENSMUSP00000113767"/>
<dbReference type="iPTMnet" id="Q3V096"/>
<dbReference type="PhosphoSitePlus" id="Q3V096"/>
<dbReference type="SwissPalm" id="Q3V096"/>
<dbReference type="PaxDb" id="10090-ENSMUSP00000113767"/>
<dbReference type="ProteomicsDB" id="281880">
    <molecule id="Q3V096-1"/>
</dbReference>
<dbReference type="ProteomicsDB" id="281881">
    <molecule id="Q3V096-2"/>
</dbReference>
<dbReference type="ProteomicsDB" id="281882">
    <molecule id="Q3V096-3"/>
</dbReference>
<dbReference type="Antibodypedia" id="17554">
    <property type="antibodies" value="88 antibodies from 19 providers"/>
</dbReference>
<dbReference type="DNASU" id="73845"/>
<dbReference type="Ensembl" id="ENSMUST00000056106.14">
    <molecule id="Q3V096-1"/>
    <property type="protein sequence ID" value="ENSMUSP00000061208.8"/>
    <property type="gene ID" value="ENSMUSG00000041343.20"/>
</dbReference>
<dbReference type="Ensembl" id="ENSMUST00000138267.2">
    <molecule id="Q3V096-3"/>
    <property type="protein sequence ID" value="ENSMUSP00000146446.2"/>
    <property type="gene ID" value="ENSMUSG00000041343.20"/>
</dbReference>
<dbReference type="GeneID" id="73845"/>
<dbReference type="KEGG" id="mmu:73845"/>
<dbReference type="UCSC" id="uc009ihx.2">
    <molecule id="Q3V096-1"/>
    <property type="organism name" value="mouse"/>
</dbReference>
<dbReference type="UCSC" id="uc009iia.2">
    <molecule id="Q3V096-2"/>
    <property type="organism name" value="mouse"/>
</dbReference>
<dbReference type="AGR" id="MGI:1921095"/>
<dbReference type="CTD" id="338699"/>
<dbReference type="MGI" id="MGI:1921095">
    <property type="gene designation" value="Ankrd42"/>
</dbReference>
<dbReference type="VEuPathDB" id="HostDB:ENSMUSG00000041343"/>
<dbReference type="eggNOG" id="KOG0504">
    <property type="taxonomic scope" value="Eukaryota"/>
</dbReference>
<dbReference type="eggNOG" id="KOG4177">
    <property type="taxonomic scope" value="Eukaryota"/>
</dbReference>
<dbReference type="GeneTree" id="ENSGT00940000154216"/>
<dbReference type="InParanoid" id="Q3V096"/>
<dbReference type="OrthoDB" id="163438at2759"/>
<dbReference type="PhylomeDB" id="Q3V096"/>
<dbReference type="TreeFam" id="TF354335"/>
<dbReference type="BioGRID-ORCS" id="73845">
    <property type="hits" value="2 hits in 76 CRISPR screens"/>
</dbReference>
<dbReference type="ChiTaRS" id="Ankrd42">
    <property type="organism name" value="mouse"/>
</dbReference>
<dbReference type="PRO" id="PR:Q3V096"/>
<dbReference type="Proteomes" id="UP000000589">
    <property type="component" value="Chromosome 7"/>
</dbReference>
<dbReference type="RNAct" id="Q3V096">
    <property type="molecule type" value="protein"/>
</dbReference>
<dbReference type="Bgee" id="ENSMUSG00000041343">
    <property type="expression patterns" value="Expressed in spermatid and 118 other cell types or tissues"/>
</dbReference>
<dbReference type="ExpressionAtlas" id="Q3V096">
    <property type="expression patterns" value="baseline and differential"/>
</dbReference>
<dbReference type="GO" id="GO:0005634">
    <property type="term" value="C:nucleus"/>
    <property type="evidence" value="ECO:0000314"/>
    <property type="project" value="MGI"/>
</dbReference>
<dbReference type="GO" id="GO:0051059">
    <property type="term" value="F:NF-kappaB binding"/>
    <property type="evidence" value="ECO:0000353"/>
    <property type="project" value="MGI"/>
</dbReference>
<dbReference type="GO" id="GO:1900017">
    <property type="term" value="P:positive regulation of cytokine production involved in inflammatory response"/>
    <property type="evidence" value="ECO:0000315"/>
    <property type="project" value="MGI"/>
</dbReference>
<dbReference type="FunFam" id="1.25.40.20:FF:000861">
    <property type="entry name" value="Ankyrin repeat domain-containing protein 42"/>
    <property type="match status" value="1"/>
</dbReference>
<dbReference type="FunFam" id="1.25.40.20:FF:000375">
    <property type="entry name" value="ankyrin repeat domain-containing protein 42"/>
    <property type="match status" value="1"/>
</dbReference>
<dbReference type="Gene3D" id="1.25.40.20">
    <property type="entry name" value="Ankyrin repeat-containing domain"/>
    <property type="match status" value="4"/>
</dbReference>
<dbReference type="InterPro" id="IPR050776">
    <property type="entry name" value="Ank_Repeat/CDKN_Inhibitor"/>
</dbReference>
<dbReference type="InterPro" id="IPR002110">
    <property type="entry name" value="Ankyrin_rpt"/>
</dbReference>
<dbReference type="InterPro" id="IPR036770">
    <property type="entry name" value="Ankyrin_rpt-contain_sf"/>
</dbReference>
<dbReference type="PANTHER" id="PTHR24201">
    <property type="entry name" value="ANK_REP_REGION DOMAIN-CONTAINING PROTEIN"/>
    <property type="match status" value="1"/>
</dbReference>
<dbReference type="PANTHER" id="PTHR24201:SF15">
    <property type="entry name" value="ANKYRIN REPEAT DOMAIN-CONTAINING PROTEIN 66"/>
    <property type="match status" value="1"/>
</dbReference>
<dbReference type="Pfam" id="PF12796">
    <property type="entry name" value="Ank_2"/>
    <property type="match status" value="3"/>
</dbReference>
<dbReference type="SMART" id="SM00248">
    <property type="entry name" value="ANK"/>
    <property type="match status" value="8"/>
</dbReference>
<dbReference type="SUPFAM" id="SSF48403">
    <property type="entry name" value="Ankyrin repeat"/>
    <property type="match status" value="1"/>
</dbReference>
<dbReference type="PROSITE" id="PS50297">
    <property type="entry name" value="ANK_REP_REGION"/>
    <property type="match status" value="1"/>
</dbReference>
<dbReference type="PROSITE" id="PS50088">
    <property type="entry name" value="ANK_REPEAT"/>
    <property type="match status" value="6"/>
</dbReference>
<organism>
    <name type="scientific">Mus musculus</name>
    <name type="common">Mouse</name>
    <dbReference type="NCBI Taxonomy" id="10090"/>
    <lineage>
        <taxon>Eukaryota</taxon>
        <taxon>Metazoa</taxon>
        <taxon>Chordata</taxon>
        <taxon>Craniata</taxon>
        <taxon>Vertebrata</taxon>
        <taxon>Euteleostomi</taxon>
        <taxon>Mammalia</taxon>
        <taxon>Eutheria</taxon>
        <taxon>Euarchontoglires</taxon>
        <taxon>Glires</taxon>
        <taxon>Rodentia</taxon>
        <taxon>Myomorpha</taxon>
        <taxon>Muroidea</taxon>
        <taxon>Muridae</taxon>
        <taxon>Murinae</taxon>
        <taxon>Mus</taxon>
        <taxon>Mus</taxon>
    </lineage>
</organism>
<gene>
    <name type="primary">Ankrd42</name>
</gene>
<feature type="chain" id="PRO_0000244372" description="Ankyrin repeat domain-containing protein 42">
    <location>
        <begin position="1"/>
        <end position="527"/>
    </location>
</feature>
<feature type="repeat" description="ANK 1">
    <location>
        <begin position="25"/>
        <end position="54"/>
    </location>
</feature>
<feature type="repeat" description="ANK 2">
    <location>
        <begin position="59"/>
        <end position="88"/>
    </location>
</feature>
<feature type="repeat" description="ANK 3">
    <location>
        <begin position="92"/>
        <end position="121"/>
    </location>
</feature>
<feature type="repeat" description="ANK 4">
    <location>
        <begin position="125"/>
        <end position="154"/>
    </location>
</feature>
<feature type="repeat" description="ANK 5">
    <location>
        <begin position="158"/>
        <end position="187"/>
    </location>
</feature>
<feature type="repeat" description="ANK 6">
    <location>
        <begin position="191"/>
        <end position="220"/>
    </location>
</feature>
<feature type="repeat" description="ANK 7">
    <location>
        <begin position="228"/>
        <end position="257"/>
    </location>
</feature>
<feature type="repeat" description="ANK 8">
    <location>
        <begin position="263"/>
        <end position="293"/>
    </location>
</feature>
<feature type="repeat" description="ANK 9">
    <location>
        <begin position="297"/>
        <end position="326"/>
    </location>
</feature>
<feature type="repeat" description="ANK 10">
    <location>
        <begin position="330"/>
        <end position="360"/>
    </location>
</feature>
<feature type="region of interest" description="Disordered" evidence="2">
    <location>
        <begin position="1"/>
        <end position="27"/>
    </location>
</feature>
<feature type="coiled-coil region" evidence="1">
    <location>
        <begin position="395"/>
        <end position="484"/>
    </location>
</feature>
<feature type="compositionally biased region" description="Basic and acidic residues" evidence="2">
    <location>
        <begin position="12"/>
        <end position="21"/>
    </location>
</feature>
<feature type="splice variant" id="VSP_019562" description="In isoform 3." evidence="3">
    <original>RFAHLAAVKLLEGLQKY</original>
    <variation>SVLSSSCGLGTVATVRR</variation>
    <location>
        <begin position="340"/>
        <end position="356"/>
    </location>
</feature>
<feature type="splice variant" id="VSP_019563" description="In isoform 2." evidence="3">
    <original>FAHLAAVKL</original>
    <variation>YKSPSTFFS</variation>
    <location>
        <begin position="341"/>
        <end position="349"/>
    </location>
</feature>
<feature type="splice variant" id="VSP_019564" description="In isoform 2." evidence="3">
    <location>
        <begin position="350"/>
        <end position="527"/>
    </location>
</feature>
<feature type="splice variant" id="VSP_019565" description="In isoform 3." evidence="3">
    <location>
        <begin position="357"/>
        <end position="527"/>
    </location>
</feature>
<feature type="sequence conflict" description="In Ref. 1; BAC26485." evidence="4" ref="1">
    <original>A</original>
    <variation>P</variation>
    <location>
        <position position="100"/>
    </location>
</feature>
<feature type="sequence conflict" description="In Ref. 1; BAC26485." evidence="4" ref="1">
    <original>A</original>
    <variation>P</variation>
    <location>
        <position position="120"/>
    </location>
</feature>
<feature type="sequence conflict" description="In Ref. 1; BAC26485." evidence="4" ref="1">
    <original>G</original>
    <variation>S</variation>
    <location>
        <position position="173"/>
    </location>
</feature>
<feature type="sequence conflict" description="In Ref. 1; BAC26659/BAC26485." evidence="4" ref="1">
    <original>S</original>
    <variation>R</variation>
    <location>
        <position position="515"/>
    </location>
</feature>
<comment type="interaction">
    <interactant intactId="EBI-15861272">
        <id>Q3V096</id>
    </interactant>
    <interactant intactId="EBI-1209141">
        <id>PRO_0000030313</id>
        <label>Nfkb1</label>
        <dbReference type="UniProtKB" id="P25799"/>
    </interactant>
    <organismsDiffer>false</organismsDiffer>
    <experiments>3</experiments>
</comment>
<comment type="alternative products">
    <event type="alternative splicing"/>
    <isoform>
        <id>Q3V096-1</id>
        <name>1</name>
        <sequence type="displayed"/>
    </isoform>
    <isoform>
        <id>Q3V096-2</id>
        <name>2</name>
        <sequence type="described" ref="VSP_019563 VSP_019564"/>
    </isoform>
    <isoform>
        <id>Q3V096-3</id>
        <name>3</name>
        <sequence type="described" ref="VSP_019562 VSP_019565"/>
    </isoform>
</comment>